<protein>
    <recommendedName>
        <fullName>Probable C-C chemokine receptor type 3</fullName>
        <shortName>C-C CKR-3</shortName>
        <shortName>CC-CKR-3</shortName>
        <shortName>CCR-3</shortName>
        <shortName>CCR3</shortName>
        <shortName>CKR3</shortName>
    </recommendedName>
    <alternativeName>
        <fullName>Macrophage inflammatory protein 1-alpha receptor-like 2</fullName>
        <shortName>MIP-1 alpha RL2</shortName>
    </alternativeName>
    <cdAntigenName>CD193</cdAntigenName>
</protein>
<gene>
    <name type="primary">Ccr3</name>
    <name type="synonym">Cmkbr1l2</name>
    <name type="synonym">Cmkbr3</name>
</gene>
<proteinExistence type="evidence at transcript level"/>
<evidence type="ECO:0000250" key="1">
    <source>
        <dbReference type="UniProtKB" id="P51677"/>
    </source>
</evidence>
<evidence type="ECO:0000255" key="2"/>
<evidence type="ECO:0000255" key="3">
    <source>
        <dbReference type="PROSITE-ProRule" id="PRU00521"/>
    </source>
</evidence>
<evidence type="ECO:0000269" key="4">
    <source>
    </source>
</evidence>
<evidence type="ECO:0000305" key="5"/>
<keyword id="KW-1003">Cell membrane</keyword>
<keyword id="KW-1015">Disulfide bond</keyword>
<keyword id="KW-0297">G-protein coupled receptor</keyword>
<keyword id="KW-0472">Membrane</keyword>
<keyword id="KW-0675">Receptor</keyword>
<keyword id="KW-1185">Reference proteome</keyword>
<keyword id="KW-0807">Transducer</keyword>
<keyword id="KW-0812">Transmembrane</keyword>
<keyword id="KW-1133">Transmembrane helix</keyword>
<accession>P51678</accession>
<accession>Q8K3M7</accession>
<feature type="chain" id="PRO_0000069242" description="Probable C-C chemokine receptor type 3">
    <location>
        <begin position="1"/>
        <end position="359"/>
    </location>
</feature>
<feature type="topological domain" description="Extracellular" evidence="2">
    <location>
        <begin position="1"/>
        <end position="38"/>
    </location>
</feature>
<feature type="transmembrane region" description="Helical; Name=1" evidence="2">
    <location>
        <begin position="39"/>
        <end position="64"/>
    </location>
</feature>
<feature type="topological domain" description="Cytoplasmic" evidence="2">
    <location>
        <begin position="65"/>
        <end position="68"/>
    </location>
</feature>
<feature type="transmembrane region" description="Helical; Name=2" evidence="2">
    <location>
        <begin position="69"/>
        <end position="95"/>
    </location>
</feature>
<feature type="topological domain" description="Extracellular" evidence="2">
    <location>
        <begin position="96"/>
        <end position="111"/>
    </location>
</feature>
<feature type="transmembrane region" description="Helical; Name=3" evidence="2">
    <location>
        <begin position="112"/>
        <end position="133"/>
    </location>
</feature>
<feature type="topological domain" description="Cytoplasmic" evidence="2">
    <location>
        <begin position="134"/>
        <end position="150"/>
    </location>
</feature>
<feature type="transmembrane region" description="Helical; Name=4" evidence="2">
    <location>
        <begin position="151"/>
        <end position="175"/>
    </location>
</feature>
<feature type="topological domain" description="Extracellular" evidence="2">
    <location>
        <begin position="176"/>
        <end position="201"/>
    </location>
</feature>
<feature type="transmembrane region" description="Helical; Name=5" evidence="2">
    <location>
        <begin position="202"/>
        <end position="227"/>
    </location>
</feature>
<feature type="topological domain" description="Cytoplasmic" evidence="2">
    <location>
        <begin position="228"/>
        <end position="243"/>
    </location>
</feature>
<feature type="transmembrane region" description="Helical; Name=6" evidence="2">
    <location>
        <begin position="244"/>
        <end position="268"/>
    </location>
</feature>
<feature type="topological domain" description="Extracellular" evidence="2">
    <location>
        <begin position="269"/>
        <end position="285"/>
    </location>
</feature>
<feature type="transmembrane region" description="Helical; Name=7" evidence="2">
    <location>
        <begin position="286"/>
        <end position="309"/>
    </location>
</feature>
<feature type="topological domain" description="Cytoplasmic" evidence="2">
    <location>
        <begin position="310"/>
        <end position="359"/>
    </location>
</feature>
<feature type="disulfide bond" evidence="3">
    <location>
        <begin position="110"/>
        <end position="187"/>
    </location>
</feature>
<feature type="sequence conflict" description="In Ref. 1; AAA86118 and 2; AAA89155." evidence="5" ref="1 2">
    <original>I</original>
    <variation>V</variation>
    <location>
        <position position="218"/>
    </location>
</feature>
<feature type="sequence conflict" description="In Ref. 1; AAA86118." evidence="5" ref="1">
    <original>S</original>
    <variation>R</variation>
    <location>
        <position position="270"/>
    </location>
</feature>
<feature type="sequence conflict" description="In Ref. 1; AAA86118 and 2; AAA89155." evidence="5" ref="1 2">
    <original>Q</original>
    <variation>E</variation>
    <location>
        <position position="278"/>
    </location>
</feature>
<feature type="sequence conflict" description="In Ref. 1; AAA86118 and 2; AAA89155." evidence="5" ref="1 2">
    <original>I</original>
    <variation>V</variation>
    <location>
        <position position="300"/>
    </location>
</feature>
<comment type="function">
    <text evidence="1">Receptor for C-C type chemokine. Binds and responds to a variety of chemokines, including CCL11, CCL26, CCL7, CCL13, RANTES(CCL5) and CCL15. Subsequently transduces a signal by increasing the intracellular calcium ions level. In addition acts as a possible functional receptor for NARS1.</text>
</comment>
<comment type="subcellular location">
    <subcellularLocation>
        <location>Cell membrane</location>
        <topology evidence="2">Multi-pass membrane protein</topology>
    </subcellularLocation>
</comment>
<comment type="tissue specificity">
    <text>Detected in skeletal muscle and in trace amounts in leukocytes.</text>
</comment>
<comment type="disruption phenotype">
    <text evidence="4">Deficient mice with induced pulmonary inflammation exhibit reduced trafficking of eosinophils from the blood into the lung parenchyma and increased numbers of intraepithelial mast cells in the trachea. Cholinergic stimulation resulted in airway hyperresponsiveness.</text>
</comment>
<comment type="similarity">
    <text evidence="3">Belongs to the G-protein coupled receptor 1 family.</text>
</comment>
<dbReference type="EMBL" id="U29677">
    <property type="protein sequence ID" value="AAA86118.1"/>
    <property type="molecule type" value="Genomic_DNA"/>
</dbReference>
<dbReference type="EMBL" id="U28406">
    <property type="protein sequence ID" value="AAA89155.1"/>
    <property type="molecule type" value="Genomic_DNA"/>
</dbReference>
<dbReference type="EMBL" id="AY049018">
    <property type="protein sequence ID" value="AAL13085.1"/>
    <property type="molecule type" value="Genomic_DNA"/>
</dbReference>
<dbReference type="EMBL" id="AK041106">
    <property type="protein sequence ID" value="BAC30823.1"/>
    <property type="molecule type" value="mRNA"/>
</dbReference>
<dbReference type="EMBL" id="CH466671">
    <property type="protein sequence ID" value="EDL37175.1"/>
    <property type="molecule type" value="Genomic_DNA"/>
</dbReference>
<dbReference type="EMBL" id="BC108967">
    <property type="protein sequence ID" value="AAI08968.1"/>
    <property type="molecule type" value="mRNA"/>
</dbReference>
<dbReference type="EMBL" id="BC108968">
    <property type="protein sequence ID" value="AAI08969.1"/>
    <property type="molecule type" value="mRNA"/>
</dbReference>
<dbReference type="CCDS" id="CCDS23668.1"/>
<dbReference type="PIR" id="I49341">
    <property type="entry name" value="I49341"/>
</dbReference>
<dbReference type="RefSeq" id="NP_034044.3">
    <property type="nucleotide sequence ID" value="NM_009914.4"/>
</dbReference>
<dbReference type="RefSeq" id="XP_017168608.1">
    <property type="nucleotide sequence ID" value="XM_017313119.3"/>
</dbReference>
<dbReference type="RefSeq" id="XP_017168609.1">
    <property type="nucleotide sequence ID" value="XM_017313120.1"/>
</dbReference>
<dbReference type="SMR" id="P51678"/>
<dbReference type="FunCoup" id="P51678">
    <property type="interactions" value="495"/>
</dbReference>
<dbReference type="STRING" id="10090.ENSMUSP00000039107"/>
<dbReference type="BindingDB" id="P51678"/>
<dbReference type="ChEMBL" id="CHEMBL3406"/>
<dbReference type="iPTMnet" id="P51678"/>
<dbReference type="PhosphoSitePlus" id="P51678"/>
<dbReference type="PaxDb" id="10090-ENSMUSP00000039107"/>
<dbReference type="ProteomicsDB" id="281255"/>
<dbReference type="Antibodypedia" id="3532">
    <property type="antibodies" value="857 antibodies from 43 providers"/>
</dbReference>
<dbReference type="DNASU" id="12771"/>
<dbReference type="Ensembl" id="ENSMUST00000039171.9">
    <property type="protein sequence ID" value="ENSMUSP00000039107.8"/>
    <property type="gene ID" value="ENSMUSG00000035448.10"/>
</dbReference>
<dbReference type="GeneID" id="12771"/>
<dbReference type="KEGG" id="mmu:12771"/>
<dbReference type="UCSC" id="uc009sha.2">
    <property type="organism name" value="mouse"/>
</dbReference>
<dbReference type="AGR" id="MGI:104616"/>
<dbReference type="CTD" id="1232"/>
<dbReference type="MGI" id="MGI:104616">
    <property type="gene designation" value="Ccr3"/>
</dbReference>
<dbReference type="VEuPathDB" id="HostDB:ENSMUSG00000035448"/>
<dbReference type="eggNOG" id="KOG3656">
    <property type="taxonomic scope" value="Eukaryota"/>
</dbReference>
<dbReference type="GeneTree" id="ENSGT01020000230359"/>
<dbReference type="HOGENOM" id="CLU_009579_8_3_1"/>
<dbReference type="InParanoid" id="P51678"/>
<dbReference type="OMA" id="DMGLLCE"/>
<dbReference type="OrthoDB" id="9445403at2759"/>
<dbReference type="PhylomeDB" id="P51678"/>
<dbReference type="TreeFam" id="TF330966"/>
<dbReference type="Reactome" id="R-MMU-380108">
    <property type="pathway name" value="Chemokine receptors bind chemokines"/>
</dbReference>
<dbReference type="Reactome" id="R-MMU-418594">
    <property type="pathway name" value="G alpha (i) signalling events"/>
</dbReference>
<dbReference type="BioGRID-ORCS" id="12771">
    <property type="hits" value="3 hits in 77 CRISPR screens"/>
</dbReference>
<dbReference type="ChiTaRS" id="Ccrl2">
    <property type="organism name" value="mouse"/>
</dbReference>
<dbReference type="PRO" id="PR:P51678"/>
<dbReference type="Proteomes" id="UP000000589">
    <property type="component" value="Chromosome 9"/>
</dbReference>
<dbReference type="RNAct" id="P51678">
    <property type="molecule type" value="protein"/>
</dbReference>
<dbReference type="Bgee" id="ENSMUSG00000035448">
    <property type="expression patterns" value="Expressed in mesodermal cell in embryo and 17 other cell types or tissues"/>
</dbReference>
<dbReference type="GO" id="GO:0005886">
    <property type="term" value="C:plasma membrane"/>
    <property type="evidence" value="ECO:0007669"/>
    <property type="project" value="UniProtKB-SubCell"/>
</dbReference>
<dbReference type="GO" id="GO:0019957">
    <property type="term" value="F:C-C chemokine binding"/>
    <property type="evidence" value="ECO:0000353"/>
    <property type="project" value="UniProtKB"/>
</dbReference>
<dbReference type="GO" id="GO:0016493">
    <property type="term" value="F:C-C chemokine receptor activity"/>
    <property type="evidence" value="ECO:0000314"/>
    <property type="project" value="MGI"/>
</dbReference>
<dbReference type="GO" id="GO:0006935">
    <property type="term" value="P:chemotaxis"/>
    <property type="evidence" value="ECO:0000314"/>
    <property type="project" value="MGI"/>
</dbReference>
<dbReference type="GO" id="GO:0006954">
    <property type="term" value="P:inflammatory response"/>
    <property type="evidence" value="ECO:0007669"/>
    <property type="project" value="InterPro"/>
</dbReference>
<dbReference type="GO" id="GO:0045766">
    <property type="term" value="P:positive regulation of angiogenesis"/>
    <property type="evidence" value="ECO:0000315"/>
    <property type="project" value="BHF-UCL"/>
</dbReference>
<dbReference type="GO" id="GO:0001938">
    <property type="term" value="P:positive regulation of endothelial cell proliferation"/>
    <property type="evidence" value="ECO:0000315"/>
    <property type="project" value="BHF-UCL"/>
</dbReference>
<dbReference type="CDD" id="cd15185">
    <property type="entry name" value="7tmA_CCR3"/>
    <property type="match status" value="1"/>
</dbReference>
<dbReference type="FunFam" id="1.20.1070.10:FF:000026">
    <property type="entry name" value="C-C chemokine receptor type 5"/>
    <property type="match status" value="1"/>
</dbReference>
<dbReference type="Gene3D" id="1.20.1070.10">
    <property type="entry name" value="Rhodopsin 7-helix transmembrane proteins"/>
    <property type="match status" value="1"/>
</dbReference>
<dbReference type="InterPro" id="IPR050119">
    <property type="entry name" value="CCR1-9-like"/>
</dbReference>
<dbReference type="InterPro" id="IPR002238">
    <property type="entry name" value="Chemokine_CCR3"/>
</dbReference>
<dbReference type="InterPro" id="IPR000355">
    <property type="entry name" value="Chemokine_rcpt"/>
</dbReference>
<dbReference type="InterPro" id="IPR000276">
    <property type="entry name" value="GPCR_Rhodpsn"/>
</dbReference>
<dbReference type="InterPro" id="IPR017452">
    <property type="entry name" value="GPCR_Rhodpsn_7TM"/>
</dbReference>
<dbReference type="PANTHER" id="PTHR10489:SF649">
    <property type="entry name" value="C-C CHEMOKINE RECEPTOR TYPE 3"/>
    <property type="match status" value="1"/>
</dbReference>
<dbReference type="PANTHER" id="PTHR10489">
    <property type="entry name" value="CELL ADHESION MOLECULE"/>
    <property type="match status" value="1"/>
</dbReference>
<dbReference type="Pfam" id="PF00001">
    <property type="entry name" value="7tm_1"/>
    <property type="match status" value="1"/>
</dbReference>
<dbReference type="PRINTS" id="PR00657">
    <property type="entry name" value="CCCHEMOKINER"/>
</dbReference>
<dbReference type="PRINTS" id="PR01108">
    <property type="entry name" value="CHEMOKINER3"/>
</dbReference>
<dbReference type="PRINTS" id="PR00237">
    <property type="entry name" value="GPCRRHODOPSN"/>
</dbReference>
<dbReference type="SUPFAM" id="SSF81321">
    <property type="entry name" value="Family A G protein-coupled receptor-like"/>
    <property type="match status" value="1"/>
</dbReference>
<dbReference type="PROSITE" id="PS00237">
    <property type="entry name" value="G_PROTEIN_RECEP_F1_1"/>
    <property type="match status" value="1"/>
</dbReference>
<dbReference type="PROSITE" id="PS50262">
    <property type="entry name" value="G_PROTEIN_RECEP_F1_2"/>
    <property type="match status" value="1"/>
</dbReference>
<name>CCR3_MOUSE</name>
<sequence length="359" mass="41783">MAFNTDEIKTVVESFETTPYEYEWAPPCEKVRIKELGSWLLPPLYSLVFIIGLLGNMMVVLILIKYRKLQIMTNIYLFNLAISDLLFLFTVPFWIHYVLWNEWGFGHYMCKMLSGFYYLALYSEIFFIILLTIDRYLAIVHAVFALRARTVTFATITSIITWGLAGLAALPEFIFHESQDSFGEFSCSPRYPEGEEDSWKRFHALRMNIFGLALPLLIMVICYSGIIKTLLRCPNKKKHKAIRLIFVVMIVFFIFWTPYNLVLLFSAFHSTFLETSCQQSKHLDLAMQVTEVIAYTHCCINPVIYAFVGERFRKHLRLFFHRNVAVYLGKYIPFLPGEKMERTSSVSPSTGEQEISVVF</sequence>
<reference key="1">
    <citation type="journal article" date="1995" name="J. Immunol.">
        <title>Molecular characterization of two murine eosinophil beta chemokine receptors.</title>
        <authorList>
            <person name="Post T.W."/>
            <person name="Bozic C.R."/>
            <person name="Rothenberg M.E."/>
            <person name="Luster A.D."/>
            <person name="Gerard N."/>
            <person name="Gerard C."/>
        </authorList>
    </citation>
    <scope>NUCLEOTIDE SEQUENCE [GENOMIC DNA]</scope>
    <source>
        <strain>129/Sv</strain>
    </source>
</reference>
<reference key="2">
    <citation type="journal article" date="1995" name="J. Biol. Chem.">
        <title>Cloning and differential tissue-specific expression of three mouse beta chemokine receptor-like genes, including the gene for a functional macrophage inflammatory protein-1 alpha receptor.</title>
        <authorList>
            <person name="Gao J.-L."/>
            <person name="Murphy P.M."/>
        </authorList>
    </citation>
    <scope>NUCLEOTIDE SEQUENCE [GENOMIC DNA]</scope>
    <source>
        <strain>129/SvJ</strain>
    </source>
</reference>
<reference key="3">
    <citation type="submission" date="2001-07" db="EMBL/GenBank/DDBJ databases">
        <title>Molecular Cloning of the Murine BALB/C CCR3 Gene.</title>
        <authorList>
            <person name="Daugherty B.L."/>
        </authorList>
    </citation>
    <scope>NUCLEOTIDE SEQUENCE [GENOMIC DNA]</scope>
    <source>
        <strain>BALB/cJ</strain>
    </source>
</reference>
<reference key="4">
    <citation type="journal article" date="2005" name="Science">
        <title>The transcriptional landscape of the mammalian genome.</title>
        <authorList>
            <person name="Carninci P."/>
            <person name="Kasukawa T."/>
            <person name="Katayama S."/>
            <person name="Gough J."/>
            <person name="Frith M.C."/>
            <person name="Maeda N."/>
            <person name="Oyama R."/>
            <person name="Ravasi T."/>
            <person name="Lenhard B."/>
            <person name="Wells C."/>
            <person name="Kodzius R."/>
            <person name="Shimokawa K."/>
            <person name="Bajic V.B."/>
            <person name="Brenner S.E."/>
            <person name="Batalov S."/>
            <person name="Forrest A.R."/>
            <person name="Zavolan M."/>
            <person name="Davis M.J."/>
            <person name="Wilming L.G."/>
            <person name="Aidinis V."/>
            <person name="Allen J.E."/>
            <person name="Ambesi-Impiombato A."/>
            <person name="Apweiler R."/>
            <person name="Aturaliya R.N."/>
            <person name="Bailey T.L."/>
            <person name="Bansal M."/>
            <person name="Baxter L."/>
            <person name="Beisel K.W."/>
            <person name="Bersano T."/>
            <person name="Bono H."/>
            <person name="Chalk A.M."/>
            <person name="Chiu K.P."/>
            <person name="Choudhary V."/>
            <person name="Christoffels A."/>
            <person name="Clutterbuck D.R."/>
            <person name="Crowe M.L."/>
            <person name="Dalla E."/>
            <person name="Dalrymple B.P."/>
            <person name="de Bono B."/>
            <person name="Della Gatta G."/>
            <person name="di Bernardo D."/>
            <person name="Down T."/>
            <person name="Engstrom P."/>
            <person name="Fagiolini M."/>
            <person name="Faulkner G."/>
            <person name="Fletcher C.F."/>
            <person name="Fukushima T."/>
            <person name="Furuno M."/>
            <person name="Futaki S."/>
            <person name="Gariboldi M."/>
            <person name="Georgii-Hemming P."/>
            <person name="Gingeras T.R."/>
            <person name="Gojobori T."/>
            <person name="Green R.E."/>
            <person name="Gustincich S."/>
            <person name="Harbers M."/>
            <person name="Hayashi Y."/>
            <person name="Hensch T.K."/>
            <person name="Hirokawa N."/>
            <person name="Hill D."/>
            <person name="Huminiecki L."/>
            <person name="Iacono M."/>
            <person name="Ikeo K."/>
            <person name="Iwama A."/>
            <person name="Ishikawa T."/>
            <person name="Jakt M."/>
            <person name="Kanapin A."/>
            <person name="Katoh M."/>
            <person name="Kawasawa Y."/>
            <person name="Kelso J."/>
            <person name="Kitamura H."/>
            <person name="Kitano H."/>
            <person name="Kollias G."/>
            <person name="Krishnan S.P."/>
            <person name="Kruger A."/>
            <person name="Kummerfeld S.K."/>
            <person name="Kurochkin I.V."/>
            <person name="Lareau L.F."/>
            <person name="Lazarevic D."/>
            <person name="Lipovich L."/>
            <person name="Liu J."/>
            <person name="Liuni S."/>
            <person name="McWilliam S."/>
            <person name="Madan Babu M."/>
            <person name="Madera M."/>
            <person name="Marchionni L."/>
            <person name="Matsuda H."/>
            <person name="Matsuzawa S."/>
            <person name="Miki H."/>
            <person name="Mignone F."/>
            <person name="Miyake S."/>
            <person name="Morris K."/>
            <person name="Mottagui-Tabar S."/>
            <person name="Mulder N."/>
            <person name="Nakano N."/>
            <person name="Nakauchi H."/>
            <person name="Ng P."/>
            <person name="Nilsson R."/>
            <person name="Nishiguchi S."/>
            <person name="Nishikawa S."/>
            <person name="Nori F."/>
            <person name="Ohara O."/>
            <person name="Okazaki Y."/>
            <person name="Orlando V."/>
            <person name="Pang K.C."/>
            <person name="Pavan W.J."/>
            <person name="Pavesi G."/>
            <person name="Pesole G."/>
            <person name="Petrovsky N."/>
            <person name="Piazza S."/>
            <person name="Reed J."/>
            <person name="Reid J.F."/>
            <person name="Ring B.Z."/>
            <person name="Ringwald M."/>
            <person name="Rost B."/>
            <person name="Ruan Y."/>
            <person name="Salzberg S.L."/>
            <person name="Sandelin A."/>
            <person name="Schneider C."/>
            <person name="Schoenbach C."/>
            <person name="Sekiguchi K."/>
            <person name="Semple C.A."/>
            <person name="Seno S."/>
            <person name="Sessa L."/>
            <person name="Sheng Y."/>
            <person name="Shibata Y."/>
            <person name="Shimada H."/>
            <person name="Shimada K."/>
            <person name="Silva D."/>
            <person name="Sinclair B."/>
            <person name="Sperling S."/>
            <person name="Stupka E."/>
            <person name="Sugiura K."/>
            <person name="Sultana R."/>
            <person name="Takenaka Y."/>
            <person name="Taki K."/>
            <person name="Tammoja K."/>
            <person name="Tan S.L."/>
            <person name="Tang S."/>
            <person name="Taylor M.S."/>
            <person name="Tegner J."/>
            <person name="Teichmann S.A."/>
            <person name="Ueda H.R."/>
            <person name="van Nimwegen E."/>
            <person name="Verardo R."/>
            <person name="Wei C.L."/>
            <person name="Yagi K."/>
            <person name="Yamanishi H."/>
            <person name="Zabarovsky E."/>
            <person name="Zhu S."/>
            <person name="Zimmer A."/>
            <person name="Hide W."/>
            <person name="Bult C."/>
            <person name="Grimmond S.M."/>
            <person name="Teasdale R.D."/>
            <person name="Liu E.T."/>
            <person name="Brusic V."/>
            <person name="Quackenbush J."/>
            <person name="Wahlestedt C."/>
            <person name="Mattick J.S."/>
            <person name="Hume D.A."/>
            <person name="Kai C."/>
            <person name="Sasaki D."/>
            <person name="Tomaru Y."/>
            <person name="Fukuda S."/>
            <person name="Kanamori-Katayama M."/>
            <person name="Suzuki M."/>
            <person name="Aoki J."/>
            <person name="Arakawa T."/>
            <person name="Iida J."/>
            <person name="Imamura K."/>
            <person name="Itoh M."/>
            <person name="Kato T."/>
            <person name="Kawaji H."/>
            <person name="Kawagashira N."/>
            <person name="Kawashima T."/>
            <person name="Kojima M."/>
            <person name="Kondo S."/>
            <person name="Konno H."/>
            <person name="Nakano K."/>
            <person name="Ninomiya N."/>
            <person name="Nishio T."/>
            <person name="Okada M."/>
            <person name="Plessy C."/>
            <person name="Shibata K."/>
            <person name="Shiraki T."/>
            <person name="Suzuki S."/>
            <person name="Tagami M."/>
            <person name="Waki K."/>
            <person name="Watahiki A."/>
            <person name="Okamura-Oho Y."/>
            <person name="Suzuki H."/>
            <person name="Kawai J."/>
            <person name="Hayashizaki Y."/>
        </authorList>
    </citation>
    <scope>NUCLEOTIDE SEQUENCE [LARGE SCALE MRNA]</scope>
    <source>
        <strain>C57BL/6J</strain>
        <tissue>Aorta</tissue>
        <tissue>Vein</tissue>
    </source>
</reference>
<reference key="5">
    <citation type="submission" date="2005-09" db="EMBL/GenBank/DDBJ databases">
        <authorList>
            <person name="Mural R.J."/>
            <person name="Adams M.D."/>
            <person name="Myers E.W."/>
            <person name="Smith H.O."/>
            <person name="Venter J.C."/>
        </authorList>
    </citation>
    <scope>NUCLEOTIDE SEQUENCE [LARGE SCALE GENOMIC DNA]</scope>
</reference>
<reference key="6">
    <citation type="journal article" date="2004" name="Genome Res.">
        <title>The status, quality, and expansion of the NIH full-length cDNA project: the Mammalian Gene Collection (MGC).</title>
        <authorList>
            <consortium name="The MGC Project Team"/>
        </authorList>
    </citation>
    <scope>NUCLEOTIDE SEQUENCE [LARGE SCALE MRNA]</scope>
</reference>
<reference key="7">
    <citation type="journal article" date="2002" name="Proc. Natl. Acad. Sci. U.S.A.">
        <title>The murine CCR3 receptor regulates both the role of eosinophils and mast cells in allergen-induced airway inflammation and hyperresponsiveness.</title>
        <authorList>
            <person name="Humbles A.A."/>
            <person name="Lu B."/>
            <person name="Friend D.S."/>
            <person name="Okinaga S."/>
            <person name="Lora J."/>
            <person name="Al-Garawi A."/>
            <person name="Martin T.R."/>
            <person name="Gerard N.P."/>
            <person name="Gerard C."/>
        </authorList>
    </citation>
    <scope>DISRUPTION PHENOTYPE</scope>
    <scope>FUNCTION</scope>
</reference>
<organism>
    <name type="scientific">Mus musculus</name>
    <name type="common">Mouse</name>
    <dbReference type="NCBI Taxonomy" id="10090"/>
    <lineage>
        <taxon>Eukaryota</taxon>
        <taxon>Metazoa</taxon>
        <taxon>Chordata</taxon>
        <taxon>Craniata</taxon>
        <taxon>Vertebrata</taxon>
        <taxon>Euteleostomi</taxon>
        <taxon>Mammalia</taxon>
        <taxon>Eutheria</taxon>
        <taxon>Euarchontoglires</taxon>
        <taxon>Glires</taxon>
        <taxon>Rodentia</taxon>
        <taxon>Myomorpha</taxon>
        <taxon>Muroidea</taxon>
        <taxon>Muridae</taxon>
        <taxon>Murinae</taxon>
        <taxon>Mus</taxon>
        <taxon>Mus</taxon>
    </lineage>
</organism>